<feature type="chain" id="PRO_0000319378" description="Probable glucomannan 4-beta-mannosyltransferase 7">
    <location>
        <begin position="1"/>
        <end position="585"/>
    </location>
</feature>
<feature type="transmembrane region" description="Helical" evidence="2">
    <location>
        <begin position="87"/>
        <end position="107"/>
    </location>
</feature>
<feature type="transmembrane region" description="Helical" evidence="2">
    <location>
        <begin position="420"/>
        <end position="440"/>
    </location>
</feature>
<feature type="transmembrane region" description="Helical" evidence="2">
    <location>
        <begin position="443"/>
        <end position="463"/>
    </location>
</feature>
<feature type="transmembrane region" description="Helical" evidence="2">
    <location>
        <begin position="534"/>
        <end position="554"/>
    </location>
</feature>
<feature type="transmembrane region" description="Helical" evidence="2">
    <location>
        <begin position="563"/>
        <end position="583"/>
    </location>
</feature>
<feature type="active site" evidence="2">
    <location>
        <position position="188"/>
    </location>
</feature>
<feature type="active site" evidence="2">
    <location>
        <position position="341"/>
    </location>
</feature>
<feature type="binding site" evidence="2">
    <location>
        <position position="247"/>
    </location>
    <ligand>
        <name>substrate</name>
    </ligand>
</feature>
<feature type="binding site" evidence="2">
    <location>
        <position position="249"/>
    </location>
    <ligand>
        <name>substrate</name>
    </ligand>
</feature>
<protein>
    <recommendedName>
        <fullName evidence="4">Probable glucomannan 4-beta-mannosyltransferase 7</fullName>
        <ecNumber evidence="1">2.4.1.32</ecNumber>
    </recommendedName>
    <alternativeName>
        <fullName evidence="3">Cellulose synthase-like protein A7</fullName>
        <shortName evidence="3">OsCslA7</shortName>
    </alternativeName>
    <alternativeName>
        <fullName evidence="4">Glucomannan synthase</fullName>
    </alternativeName>
    <alternativeName>
        <fullName evidence="4">Mannan synthase 7</fullName>
    </alternativeName>
</protein>
<keyword id="KW-0961">Cell wall biogenesis/degradation</keyword>
<keyword id="KW-0328">Glycosyltransferase</keyword>
<keyword id="KW-0333">Golgi apparatus</keyword>
<keyword id="KW-0472">Membrane</keyword>
<keyword id="KW-1185">Reference proteome</keyword>
<keyword id="KW-0808">Transferase</keyword>
<keyword id="KW-0812">Transmembrane</keyword>
<keyword id="KW-1133">Transmembrane helix</keyword>
<name>CSLA7_ORYSJ</name>
<sequence length="585" mass="65164">MVEAGEIGGAAVFALAAAAALSAASSLGAVDFRRPLAAVGGGGAFEWDGVVPWLIGVLGGGDEAAAGGVSVGVAAWYEVWVRVRGGVIAPTLQVAVWVCMVMSVMLVVEATFNSAVSLGVKAIGWRPEWRFKWEPLAGADEEKGRGEYPMVMVQIPMYNELEVYKLSIGAACELKWPKDKLIVQVLDDSTDPFIKNLVELECESWASKGVNIKYVTRSSRKGFKAGALKKGMECDYTKQCEYIAIFDADFQPEPNFLLRTVPFLMHNPNVALVQARWAFVNDTTSLLTRVQKMFFDYHFKVEQEAGSATFAFFSFNGTAGVWRTTAINEAGGWKDRTTVEDMDLAVRASLNGWKFIYVGDIRVKSELPSTYGAYCRQQFRWACGGANLFRKIAMDVLVAKDISLLKKFYMLYSFFLVRRVVAPMVACVLYNIIVPLSVMIPELFIPIWGVAYIPMALLIITTIRNPRNLHIMPFWILFESVMTVLRMRAALTGLMELSGFNKWTVTKKIGSSVEDTQVPLLPKTRKRLRDRINLPEIGFSVFLIFCASYNLIFHGKTSYYFNLYLQGLAFLLLGFNFTGNFACCQ</sequence>
<proteinExistence type="evidence at transcript level"/>
<dbReference type="EC" id="2.4.1.32" evidence="1"/>
<dbReference type="EMBL" id="DQ665942">
    <property type="protein sequence ID" value="ABG34297.1"/>
    <property type="molecule type" value="mRNA"/>
</dbReference>
<dbReference type="EMBL" id="AP004260">
    <property type="protein sequence ID" value="BAC79726.1"/>
    <property type="molecule type" value="Genomic_DNA"/>
</dbReference>
<dbReference type="EMBL" id="AP008213">
    <property type="protein sequence ID" value="BAF22272.2"/>
    <property type="status" value="ALT_SEQ"/>
    <property type="molecule type" value="Genomic_DNA"/>
</dbReference>
<dbReference type="EMBL" id="AP014963">
    <property type="protein sequence ID" value="BAT02768.1"/>
    <property type="molecule type" value="Genomic_DNA"/>
</dbReference>
<dbReference type="EMBL" id="AK064833">
    <property type="protein sequence ID" value="BAG89230.1"/>
    <property type="molecule type" value="mRNA"/>
</dbReference>
<dbReference type="EMBL" id="AF435643">
    <property type="protein sequence ID" value="AAL38528.1"/>
    <property type="molecule type" value="mRNA"/>
</dbReference>
<dbReference type="RefSeq" id="XP_015645073.1">
    <property type="nucleotide sequence ID" value="XM_015789587.1"/>
</dbReference>
<dbReference type="SMR" id="Q7XIF5"/>
<dbReference type="FunCoup" id="Q7XIF5">
    <property type="interactions" value="16"/>
</dbReference>
<dbReference type="STRING" id="39947.Q7XIF5"/>
<dbReference type="CAZy" id="GT2">
    <property type="family name" value="Glycosyltransferase Family 2"/>
</dbReference>
<dbReference type="PaxDb" id="39947-Q7XIF5"/>
<dbReference type="EnsemblPlants" id="Os07t0630900-02">
    <property type="protein sequence ID" value="Os07t0630900-02"/>
    <property type="gene ID" value="Os07g0630900"/>
</dbReference>
<dbReference type="Gramene" id="Os07t0630900-02">
    <property type="protein sequence ID" value="Os07t0630900-02"/>
    <property type="gene ID" value="Os07g0630900"/>
</dbReference>
<dbReference type="KEGG" id="dosa:Os07g0630900"/>
<dbReference type="eggNOG" id="ENOG502QVIM">
    <property type="taxonomic scope" value="Eukaryota"/>
</dbReference>
<dbReference type="HOGENOM" id="CLU_012856_2_0_1"/>
<dbReference type="InParanoid" id="Q7XIF5"/>
<dbReference type="OMA" id="PRNLHIM"/>
<dbReference type="OrthoDB" id="72851at2759"/>
<dbReference type="Proteomes" id="UP000000763">
    <property type="component" value="Chromosome 7"/>
</dbReference>
<dbReference type="Proteomes" id="UP000059680">
    <property type="component" value="Chromosome 7"/>
</dbReference>
<dbReference type="ExpressionAtlas" id="Q7XIF5">
    <property type="expression patterns" value="baseline and differential"/>
</dbReference>
<dbReference type="GO" id="GO:0005794">
    <property type="term" value="C:Golgi apparatus"/>
    <property type="evidence" value="ECO:0000318"/>
    <property type="project" value="GO_Central"/>
</dbReference>
<dbReference type="GO" id="GO:0000139">
    <property type="term" value="C:Golgi membrane"/>
    <property type="evidence" value="ECO:0007669"/>
    <property type="project" value="UniProtKB-SubCell"/>
</dbReference>
<dbReference type="GO" id="GO:0047259">
    <property type="term" value="F:glucomannan 4-beta-mannosyltransferase activity"/>
    <property type="evidence" value="ECO:0007669"/>
    <property type="project" value="UniProtKB-EC"/>
</dbReference>
<dbReference type="GO" id="GO:0051753">
    <property type="term" value="F:mannan synthase activity"/>
    <property type="evidence" value="ECO:0000318"/>
    <property type="project" value="GO_Central"/>
</dbReference>
<dbReference type="GO" id="GO:0071555">
    <property type="term" value="P:cell wall organization"/>
    <property type="evidence" value="ECO:0007669"/>
    <property type="project" value="UniProtKB-KW"/>
</dbReference>
<dbReference type="FunFam" id="3.90.550.10:FF:000057">
    <property type="entry name" value="Glycosyltransferase-like protein, family 2"/>
    <property type="match status" value="1"/>
</dbReference>
<dbReference type="Gene3D" id="3.90.550.10">
    <property type="entry name" value="Spore Coat Polysaccharide Biosynthesis Protein SpsA, Chain A"/>
    <property type="match status" value="1"/>
</dbReference>
<dbReference type="InterPro" id="IPR001173">
    <property type="entry name" value="Glyco_trans_2-like"/>
</dbReference>
<dbReference type="InterPro" id="IPR029044">
    <property type="entry name" value="Nucleotide-diphossugar_trans"/>
</dbReference>
<dbReference type="PANTHER" id="PTHR32044:SF12">
    <property type="entry name" value="GLUCOMANNAN 4-BETA-MANNOSYLTRANSFERASE 7-RELATED"/>
    <property type="match status" value="1"/>
</dbReference>
<dbReference type="PANTHER" id="PTHR32044">
    <property type="entry name" value="GLUCOMANNAN 4-BETA-MANNOSYLTRANSFERASE 9"/>
    <property type="match status" value="1"/>
</dbReference>
<dbReference type="Pfam" id="PF13632">
    <property type="entry name" value="Glyco_trans_2_3"/>
    <property type="match status" value="1"/>
</dbReference>
<dbReference type="SUPFAM" id="SSF53448">
    <property type="entry name" value="Nucleotide-diphospho-sugar transferases"/>
    <property type="match status" value="1"/>
</dbReference>
<evidence type="ECO:0000250" key="1">
    <source>
        <dbReference type="UniProtKB" id="Q7PC76"/>
    </source>
</evidence>
<evidence type="ECO:0000255" key="2"/>
<evidence type="ECO:0000303" key="3">
    <source>
    </source>
</evidence>
<evidence type="ECO:0000305" key="4"/>
<reference key="1">
    <citation type="journal article" date="2005" name="Proc. Natl. Acad. Sci. U.S.A.">
        <title>Expression of cellulose synthase-like (Csl) genes in insect cells reveals that CslA family members encode mannan synthases.</title>
        <authorList>
            <person name="Liepman A.H."/>
            <person name="Wilkerson C.G."/>
            <person name="Keegstra K."/>
        </authorList>
    </citation>
    <scope>NUCLEOTIDE SEQUENCE [MRNA]</scope>
    <source>
        <strain>cv. Nipponbare</strain>
    </source>
</reference>
<reference key="2">
    <citation type="journal article" date="2005" name="Nature">
        <title>The map-based sequence of the rice genome.</title>
        <authorList>
            <consortium name="International rice genome sequencing project (IRGSP)"/>
        </authorList>
    </citation>
    <scope>NUCLEOTIDE SEQUENCE [LARGE SCALE GENOMIC DNA]</scope>
    <source>
        <strain>cv. Nipponbare</strain>
    </source>
</reference>
<reference key="3">
    <citation type="journal article" date="2008" name="Nucleic Acids Res.">
        <title>The rice annotation project database (RAP-DB): 2008 update.</title>
        <authorList>
            <consortium name="The rice annotation project (RAP)"/>
        </authorList>
    </citation>
    <scope>GENOME REANNOTATION</scope>
    <source>
        <strain>cv. Nipponbare</strain>
    </source>
</reference>
<reference key="4">
    <citation type="journal article" date="2013" name="Rice">
        <title>Improvement of the Oryza sativa Nipponbare reference genome using next generation sequence and optical map data.</title>
        <authorList>
            <person name="Kawahara Y."/>
            <person name="de la Bastide M."/>
            <person name="Hamilton J.P."/>
            <person name="Kanamori H."/>
            <person name="McCombie W.R."/>
            <person name="Ouyang S."/>
            <person name="Schwartz D.C."/>
            <person name="Tanaka T."/>
            <person name="Wu J."/>
            <person name="Zhou S."/>
            <person name="Childs K.L."/>
            <person name="Davidson R.M."/>
            <person name="Lin H."/>
            <person name="Quesada-Ocampo L."/>
            <person name="Vaillancourt B."/>
            <person name="Sakai H."/>
            <person name="Lee S.S."/>
            <person name="Kim J."/>
            <person name="Numa H."/>
            <person name="Itoh T."/>
            <person name="Buell C.R."/>
            <person name="Matsumoto T."/>
        </authorList>
    </citation>
    <scope>GENOME REANNOTATION</scope>
    <source>
        <strain>cv. Nipponbare</strain>
    </source>
</reference>
<reference key="5">
    <citation type="journal article" date="2003" name="Science">
        <title>Collection, mapping, and annotation of over 28,000 cDNA clones from japonica rice.</title>
        <authorList>
            <consortium name="The rice full-length cDNA consortium"/>
        </authorList>
    </citation>
    <scope>NUCLEOTIDE SEQUENCE [LARGE SCALE MRNA]</scope>
    <source>
        <strain>cv. Nipponbare</strain>
    </source>
</reference>
<reference key="6">
    <citation type="journal article" date="2002" name="Plant Physiol.">
        <title>Cellulose synthase-like genes of rice.</title>
        <authorList>
            <person name="Hazen S.P."/>
            <person name="Scott-Craig J.S."/>
            <person name="Walton J.D."/>
        </authorList>
    </citation>
    <scope>NUCLEOTIDE SEQUENCE [MRNA] OF 107-585</scope>
    <scope>GENE FAMILY</scope>
    <scope>NOMENCLATURE</scope>
</reference>
<accession>Q7XIF5</accession>
<accession>B7EA33</accession>
<accession>Q8W1N6</accession>
<comment type="function">
    <text evidence="1">Probable mannan synthase which consists of a 4-beta-mannosyltransferase activity on mannan using GDP-mannose. The beta-1,4-mannan product is the backbone for galactomannan synthesis by galactomannan galactosyltransferase. Galactomannan is a noncellulosic polysaccharides of plant cell wall.</text>
</comment>
<comment type="catalytic activity">
    <reaction evidence="1">
        <text>GDP-mannose + (glucomannan)n = GDP + (glucomannan)n+1.</text>
        <dbReference type="EC" id="2.4.1.32"/>
    </reaction>
</comment>
<comment type="subcellular location">
    <subcellularLocation>
        <location evidence="4">Golgi apparatus membrane</location>
        <topology evidence="4">Multi-pass membrane protein</topology>
    </subcellularLocation>
</comment>
<comment type="similarity">
    <text evidence="4">Belongs to the glycosyltransferase 2 family. Plant cellulose synthase-like A subfamily.</text>
</comment>
<comment type="sequence caution" evidence="4">
    <conflict type="erroneous gene model prediction">
        <sequence resource="EMBL-CDS" id="BAF22272"/>
    </conflict>
</comment>
<gene>
    <name evidence="3" type="primary">CSLA7</name>
    <name type="ordered locus">Os07g0630900</name>
    <name type="ordered locus">LOC_Os07g43710</name>
    <name type="ORF">P0011H09.139</name>
</gene>
<organism>
    <name type="scientific">Oryza sativa subsp. japonica</name>
    <name type="common">Rice</name>
    <dbReference type="NCBI Taxonomy" id="39947"/>
    <lineage>
        <taxon>Eukaryota</taxon>
        <taxon>Viridiplantae</taxon>
        <taxon>Streptophyta</taxon>
        <taxon>Embryophyta</taxon>
        <taxon>Tracheophyta</taxon>
        <taxon>Spermatophyta</taxon>
        <taxon>Magnoliopsida</taxon>
        <taxon>Liliopsida</taxon>
        <taxon>Poales</taxon>
        <taxon>Poaceae</taxon>
        <taxon>BOP clade</taxon>
        <taxon>Oryzoideae</taxon>
        <taxon>Oryzeae</taxon>
        <taxon>Oryzinae</taxon>
        <taxon>Oryza</taxon>
        <taxon>Oryza sativa</taxon>
    </lineage>
</organism>